<accession>Q2KII7</accession>
<comment type="function">
    <text evidence="1">Required for peroxisome membrane biogenesis. May play a role in early stages of peroxisome assembly. Can recruit other peroxisomal proteins, such as PEX3 and PMP34, to de novo peroxisomes derived from the endoplasmic reticulum (ER). May function as receptor for PEX3 (By similarity).</text>
</comment>
<comment type="subunit">
    <text evidence="1">Interacts with PEX19.</text>
</comment>
<comment type="subcellular location">
    <subcellularLocation>
        <location evidence="1">Peroxisome membrane</location>
        <topology evidence="1">Multi-pass membrane protein</topology>
    </subcellularLocation>
</comment>
<comment type="alternative products">
    <event type="alternative splicing"/>
    <isoform>
        <id>Q2KII7-1</id>
        <name>1</name>
        <sequence type="displayed"/>
    </isoform>
    <isoform>
        <id>Q2KII7-2</id>
        <name>2</name>
        <sequence type="described" ref="VSP_036594"/>
    </isoform>
</comment>
<comment type="similarity">
    <text evidence="5">Belongs to the peroxin-16 family.</text>
</comment>
<gene>
    <name type="primary">PEX16</name>
</gene>
<name>PEX16_BOVIN</name>
<protein>
    <recommendedName>
        <fullName>Peroxisomal membrane protein PEX16</fullName>
    </recommendedName>
    <alternativeName>
        <fullName>Peroxin-16</fullName>
    </alternativeName>
    <alternativeName>
        <fullName>Peroxisomal biogenesis factor 16</fullName>
    </alternativeName>
</protein>
<sequence length="328" mass="37574">MEKLRLLGLRYQEYVTRHPAATAQLETAVRGLSYLLAGRFADSHELSELVYSASNLLVLLNDGILRKELRKKLPMSLSQQRLLTWLSVLECVEVFMEMGATKVWGEVGRWLVIALIQLAKAVLRMFLLIWFKAGLQTSPPIVPLDREIQAQSRDGDHSSGSQEQSYVGKRSNRVVRTLQNTPSLHSRHWGAPQQREELGVAPTPLGLQETIAESLHIARPLLHLLSLGLWGQRSWTPWLLSGVVDVTSLSLLSDRKGLTRRERLELRRRTILLLYYLLRSPFYDRFSEAKILFLLQLLADHVPGIGLVTRPLMDYLPNWQKIYFYSWG</sequence>
<proteinExistence type="evidence at transcript level"/>
<reference key="1">
    <citation type="journal article" date="2009" name="Science">
        <title>The genome sequence of taurine cattle: a window to ruminant biology and evolution.</title>
        <authorList>
            <consortium name="The bovine genome sequencing and analysis consortium"/>
        </authorList>
    </citation>
    <scope>NUCLEOTIDE SEQUENCE [LARGE SCALE GENOMIC DNA]</scope>
    <source>
        <strain>Hereford</strain>
    </source>
</reference>
<reference key="2">
    <citation type="submission" date="2006-01" db="EMBL/GenBank/DDBJ databases">
        <authorList>
            <consortium name="NIH - Mammalian Gene Collection (MGC) project"/>
        </authorList>
    </citation>
    <scope>NUCLEOTIDE SEQUENCE [LARGE SCALE MRNA] (ISOFORM 2)</scope>
    <source>
        <strain>Hereford</strain>
        <tissue>Hypothalamus</tissue>
    </source>
</reference>
<evidence type="ECO:0000250" key="1">
    <source>
        <dbReference type="UniProtKB" id="Q9Y5Y5"/>
    </source>
</evidence>
<evidence type="ECO:0000255" key="2"/>
<evidence type="ECO:0000256" key="3">
    <source>
        <dbReference type="SAM" id="MobiDB-lite"/>
    </source>
</evidence>
<evidence type="ECO:0000303" key="4">
    <source ref="2"/>
</evidence>
<evidence type="ECO:0000305" key="5"/>
<organism>
    <name type="scientific">Bos taurus</name>
    <name type="common">Bovine</name>
    <dbReference type="NCBI Taxonomy" id="9913"/>
    <lineage>
        <taxon>Eukaryota</taxon>
        <taxon>Metazoa</taxon>
        <taxon>Chordata</taxon>
        <taxon>Craniata</taxon>
        <taxon>Vertebrata</taxon>
        <taxon>Euteleostomi</taxon>
        <taxon>Mammalia</taxon>
        <taxon>Eutheria</taxon>
        <taxon>Laurasiatheria</taxon>
        <taxon>Artiodactyla</taxon>
        <taxon>Ruminantia</taxon>
        <taxon>Pecora</taxon>
        <taxon>Bovidae</taxon>
        <taxon>Bovinae</taxon>
        <taxon>Bos</taxon>
    </lineage>
</organism>
<keyword id="KW-0025">Alternative splicing</keyword>
<keyword id="KW-0472">Membrane</keyword>
<keyword id="KW-0576">Peroxisome</keyword>
<keyword id="KW-0962">Peroxisome biogenesis</keyword>
<keyword id="KW-1185">Reference proteome</keyword>
<keyword id="KW-0812">Transmembrane</keyword>
<keyword id="KW-1133">Transmembrane helix</keyword>
<feature type="chain" id="PRO_0000366960" description="Peroxisomal membrane protein PEX16">
    <location>
        <begin position="1"/>
        <end position="328"/>
    </location>
</feature>
<feature type="topological domain" description="Cytoplasmic" evidence="2">
    <location>
        <begin position="1"/>
        <end position="84"/>
    </location>
</feature>
<feature type="transmembrane region" description="Helical" evidence="2">
    <location>
        <begin position="85"/>
        <end position="105"/>
    </location>
</feature>
<feature type="topological domain" description="Peroxisomal" evidence="2">
    <location>
        <begin position="106"/>
        <end position="110"/>
    </location>
</feature>
<feature type="transmembrane region" description="Helical" evidence="2">
    <location>
        <begin position="111"/>
        <end position="131"/>
    </location>
</feature>
<feature type="topological domain" description="Cytoplasmic" evidence="2">
    <location>
        <begin position="132"/>
        <end position="328"/>
    </location>
</feature>
<feature type="region of interest" description="Required for peroxisomal location" evidence="1">
    <location>
        <begin position="66"/>
        <end position="81"/>
    </location>
</feature>
<feature type="region of interest" description="Disordered" evidence="3">
    <location>
        <begin position="149"/>
        <end position="169"/>
    </location>
</feature>
<feature type="region of interest" description="Interaction with PEX19" evidence="1">
    <location>
        <begin position="213"/>
        <end position="328"/>
    </location>
</feature>
<feature type="splice variant" id="VSP_036594" description="In isoform 2." evidence="4">
    <location>
        <begin position="121"/>
        <end position="146"/>
    </location>
</feature>
<dbReference type="EMBL" id="AAFC03090303">
    <property type="status" value="NOT_ANNOTATED_CDS"/>
    <property type="molecule type" value="Genomic_DNA"/>
</dbReference>
<dbReference type="EMBL" id="BC112623">
    <property type="protein sequence ID" value="AAI12624.1"/>
    <property type="molecule type" value="mRNA"/>
</dbReference>
<dbReference type="RefSeq" id="NP_001068917.1">
    <molecule id="Q2KII7-2"/>
    <property type="nucleotide sequence ID" value="NM_001075449.2"/>
</dbReference>
<dbReference type="RefSeq" id="XP_005216504.1">
    <molecule id="Q2KII7-1"/>
    <property type="nucleotide sequence ID" value="XM_005216447.5"/>
</dbReference>
<dbReference type="FunCoup" id="Q2KII7">
    <property type="interactions" value="3210"/>
</dbReference>
<dbReference type="STRING" id="9913.ENSBTAP00000072447"/>
<dbReference type="PaxDb" id="9913-ENSBTAP00000004065"/>
<dbReference type="GeneID" id="510447"/>
<dbReference type="KEGG" id="bta:510447"/>
<dbReference type="CTD" id="9409"/>
<dbReference type="VEuPathDB" id="HostDB:ENSBTAG00000003126"/>
<dbReference type="eggNOG" id="KOG4546">
    <property type="taxonomic scope" value="Eukaryota"/>
</dbReference>
<dbReference type="HOGENOM" id="CLU_070601_0_0_1"/>
<dbReference type="InParanoid" id="Q2KII7"/>
<dbReference type="OrthoDB" id="2021143at2759"/>
<dbReference type="TreeFam" id="TF324139"/>
<dbReference type="Reactome" id="R-BTA-9603798">
    <property type="pathway name" value="Class I peroxisomal membrane protein import"/>
</dbReference>
<dbReference type="Proteomes" id="UP000009136">
    <property type="component" value="Chromosome 15"/>
</dbReference>
<dbReference type="Bgee" id="ENSBTAG00000003126">
    <property type="expression patterns" value="Expressed in retina and 105 other cell types or tissues"/>
</dbReference>
<dbReference type="GO" id="GO:0005789">
    <property type="term" value="C:endoplasmic reticulum membrane"/>
    <property type="evidence" value="ECO:0000250"/>
    <property type="project" value="UniProtKB"/>
</dbReference>
<dbReference type="GO" id="GO:0005778">
    <property type="term" value="C:peroxisomal membrane"/>
    <property type="evidence" value="ECO:0000250"/>
    <property type="project" value="UniProtKB"/>
</dbReference>
<dbReference type="GO" id="GO:0005777">
    <property type="term" value="C:peroxisome"/>
    <property type="evidence" value="ECO:0000250"/>
    <property type="project" value="UniProtKB"/>
</dbReference>
<dbReference type="GO" id="GO:0032581">
    <property type="term" value="P:ER-dependent peroxisome organization"/>
    <property type="evidence" value="ECO:0000250"/>
    <property type="project" value="UniProtKB"/>
</dbReference>
<dbReference type="GO" id="GO:0016557">
    <property type="term" value="P:peroxisome membrane biogenesis"/>
    <property type="evidence" value="ECO:0000250"/>
    <property type="project" value="UniProtKB"/>
</dbReference>
<dbReference type="GO" id="GO:0007031">
    <property type="term" value="P:peroxisome organization"/>
    <property type="evidence" value="ECO:0000250"/>
    <property type="project" value="UniProtKB"/>
</dbReference>
<dbReference type="GO" id="GO:0045046">
    <property type="term" value="P:protein import into peroxisome membrane"/>
    <property type="evidence" value="ECO:0000250"/>
    <property type="project" value="UniProtKB"/>
</dbReference>
<dbReference type="GO" id="GO:0006625">
    <property type="term" value="P:protein targeting to peroxisome"/>
    <property type="evidence" value="ECO:0000250"/>
    <property type="project" value="UniProtKB"/>
</dbReference>
<dbReference type="InterPro" id="IPR013919">
    <property type="entry name" value="Pex16"/>
</dbReference>
<dbReference type="PANTHER" id="PTHR13299">
    <property type="entry name" value="PEROXISOMAL MEMBRANE PROTEIN PEX16"/>
    <property type="match status" value="1"/>
</dbReference>
<dbReference type="PANTHER" id="PTHR13299:SF0">
    <property type="entry name" value="PEROXISOMAL MEMBRANE PROTEIN PEX16"/>
    <property type="match status" value="1"/>
</dbReference>
<dbReference type="Pfam" id="PF08610">
    <property type="entry name" value="Pex16"/>
    <property type="match status" value="1"/>
</dbReference>